<keyword id="KW-0484">Methanogenesis</keyword>
<keyword id="KW-0554">One-carbon metabolism</keyword>
<keyword id="KW-0560">Oxidoreductase</keyword>
<keyword id="KW-1185">Reference proteome</keyword>
<accession>B8GJQ7</accession>
<feature type="chain" id="PRO_1000117813" description="F420-dependent methylenetetrahydromethanopterin dehydrogenase">
    <location>
        <begin position="1"/>
        <end position="280"/>
    </location>
</feature>
<protein>
    <recommendedName>
        <fullName evidence="1">F420-dependent methylenetetrahydromethanopterin dehydrogenase</fullName>
        <shortName evidence="1">MTD</shortName>
        <ecNumber evidence="1">1.5.98.1</ecNumber>
    </recommendedName>
    <alternativeName>
        <fullName evidence="1">Coenzyme F420-dependent N5,N10-methylenetetrahydromethanopterin dehydrogenase</fullName>
    </alternativeName>
</protein>
<proteinExistence type="inferred from homology"/>
<comment type="function">
    <text evidence="1">Catalyzes the reversible reduction of methenyl-H(4)MPT(+) to methylene-H(4)MPT.</text>
</comment>
<comment type="catalytic activity">
    <reaction evidence="1">
        <text>5,10-methylenetetrahydromethanopterin + oxidized coenzyme F420-(gamma-L-Glu)(n) + 2 H(+) = 5,10-methenyl-5,6,7,8-tetrahydromethanopterin + reduced coenzyme F420-(gamma-L-Glu)(n)</text>
        <dbReference type="Rhea" id="RHEA:16721"/>
        <dbReference type="Rhea" id="RHEA-COMP:12939"/>
        <dbReference type="Rhea" id="RHEA-COMP:14378"/>
        <dbReference type="ChEBI" id="CHEBI:15378"/>
        <dbReference type="ChEBI" id="CHEBI:57818"/>
        <dbReference type="ChEBI" id="CHEBI:58337"/>
        <dbReference type="ChEBI" id="CHEBI:133980"/>
        <dbReference type="ChEBI" id="CHEBI:139511"/>
        <dbReference type="EC" id="1.5.98.1"/>
    </reaction>
</comment>
<comment type="pathway">
    <text evidence="1">One-carbon metabolism; methanogenesis from CO(2); 5,10-methylene-5,6,7,8-tetrahydromethanopterin from 5,10-methenyl-5,6,7,8-tetrahydromethanopterin (coenzyme F420 route): step 1/1.</text>
</comment>
<comment type="similarity">
    <text evidence="1">Belongs to the MTD family.</text>
</comment>
<sequence>MVVKVGIAKLGNIASGVMAELLLDERADREDMQTFMATSGTKLQPEDIDRVVSTMKAWEPDFCIVVSPNGVLPGPVGARDELLKAGIPCVVITDDITTKKEGWEALKASSFGYIIMKADAMIGARREFLDPVEMADFNGNLVKVLALTGAFRKLQTELDKVIDQVKEGKKGADLVLPKVVMTSDKAVDGEFSNPYALAKARAAYEIAQAVAGVNVKGCFMTKEWEKYIPIVASAHEMMRQAAALGDEAREIEKAGNGIIRKPHKKDGTIVSKITLISKPE</sequence>
<organism>
    <name type="scientific">Methanosphaerula palustris (strain ATCC BAA-1556 / DSM 19958 / E1-9c)</name>
    <dbReference type="NCBI Taxonomy" id="521011"/>
    <lineage>
        <taxon>Archaea</taxon>
        <taxon>Methanobacteriati</taxon>
        <taxon>Methanobacteriota</taxon>
        <taxon>Stenosarchaea group</taxon>
        <taxon>Methanomicrobia</taxon>
        <taxon>Methanomicrobiales</taxon>
        <taxon>Methanoregulaceae</taxon>
        <taxon>Methanosphaerula</taxon>
    </lineage>
</organism>
<name>MTD_METPE</name>
<gene>
    <name evidence="1" type="primary">mtd</name>
    <name type="ordered locus">Mpal_0329</name>
</gene>
<evidence type="ECO:0000255" key="1">
    <source>
        <dbReference type="HAMAP-Rule" id="MF_00058"/>
    </source>
</evidence>
<reference key="1">
    <citation type="journal article" date="2015" name="Genome Announc.">
        <title>Complete Genome Sequence of Methanosphaerula palustris E1-9CT, a Hydrogenotrophic Methanogen Isolated from a Minerotrophic Fen Peatland.</title>
        <authorList>
            <person name="Cadillo-Quiroz H."/>
            <person name="Browne P."/>
            <person name="Kyrpides N."/>
            <person name="Woyke T."/>
            <person name="Goodwin L."/>
            <person name="Detter C."/>
            <person name="Yavitt J.B."/>
            <person name="Zinder S.H."/>
        </authorList>
    </citation>
    <scope>NUCLEOTIDE SEQUENCE [LARGE SCALE GENOMIC DNA]</scope>
    <source>
        <strain>ATCC BAA-1556 / DSM 19958 / E1-9c</strain>
    </source>
</reference>
<dbReference type="EC" id="1.5.98.1" evidence="1"/>
<dbReference type="EMBL" id="CP001338">
    <property type="protein sequence ID" value="ACL15711.1"/>
    <property type="molecule type" value="Genomic_DNA"/>
</dbReference>
<dbReference type="RefSeq" id="WP_012617030.1">
    <property type="nucleotide sequence ID" value="NC_011832.1"/>
</dbReference>
<dbReference type="SMR" id="B8GJQ7"/>
<dbReference type="STRING" id="521011.Mpal_0329"/>
<dbReference type="GeneID" id="7272630"/>
<dbReference type="KEGG" id="mpl:Mpal_0329"/>
<dbReference type="eggNOG" id="arCOG04382">
    <property type="taxonomic scope" value="Archaea"/>
</dbReference>
<dbReference type="HOGENOM" id="CLU_1006890_0_0_2"/>
<dbReference type="OrthoDB" id="49844at2157"/>
<dbReference type="UniPathway" id="UPA00640">
    <property type="reaction ID" value="UER00695"/>
</dbReference>
<dbReference type="Proteomes" id="UP000002457">
    <property type="component" value="Chromosome"/>
</dbReference>
<dbReference type="GO" id="GO:0008901">
    <property type="term" value="F:ferredoxin hydrogenase activity"/>
    <property type="evidence" value="ECO:0007669"/>
    <property type="project" value="InterPro"/>
</dbReference>
<dbReference type="GO" id="GO:0030268">
    <property type="term" value="F:methylenetetrahydromethanopterin dehydrogenase activity"/>
    <property type="evidence" value="ECO:0007669"/>
    <property type="project" value="UniProtKB-UniRule"/>
</dbReference>
<dbReference type="GO" id="GO:0019386">
    <property type="term" value="P:methanogenesis, from carbon dioxide"/>
    <property type="evidence" value="ECO:0007669"/>
    <property type="project" value="UniProtKB-UniRule"/>
</dbReference>
<dbReference type="GO" id="GO:0006730">
    <property type="term" value="P:one-carbon metabolic process"/>
    <property type="evidence" value="ECO:0007669"/>
    <property type="project" value="UniProtKB-UniRule"/>
</dbReference>
<dbReference type="Gene3D" id="6.10.140.120">
    <property type="match status" value="1"/>
</dbReference>
<dbReference type="Gene3D" id="3.40.50.10830">
    <property type="entry name" value="F420-dependent methylenetetrahydromethanopterin dehydrogenase (MTD)"/>
    <property type="match status" value="1"/>
</dbReference>
<dbReference type="HAMAP" id="MF_00058">
    <property type="entry name" value="MTD"/>
    <property type="match status" value="1"/>
</dbReference>
<dbReference type="InterPro" id="IPR002844">
    <property type="entry name" value="MTD"/>
</dbReference>
<dbReference type="InterPro" id="IPR036080">
    <property type="entry name" value="MTD_sf"/>
</dbReference>
<dbReference type="NCBIfam" id="NF002162">
    <property type="entry name" value="PRK00994.1"/>
    <property type="match status" value="1"/>
</dbReference>
<dbReference type="Pfam" id="PF01993">
    <property type="entry name" value="MTD"/>
    <property type="match status" value="1"/>
</dbReference>
<dbReference type="PIRSF" id="PIRSF005627">
    <property type="entry name" value="MTD"/>
    <property type="match status" value="1"/>
</dbReference>
<dbReference type="SUPFAM" id="SSF102324">
    <property type="entry name" value="F420-dependent methylenetetrahydromethanopterin dehydrogenase (MTD)"/>
    <property type="match status" value="1"/>
</dbReference>